<gene>
    <name evidence="10" type="primary">Rbm27</name>
    <name type="synonym">Kiaa1311</name>
</gene>
<dbReference type="EMBL" id="AY461716">
    <property type="protein sequence ID" value="AAS19274.1"/>
    <property type="molecule type" value="mRNA"/>
</dbReference>
<dbReference type="EMBL" id="AC125110">
    <property type="status" value="NOT_ANNOTATED_CDS"/>
    <property type="molecule type" value="Genomic_DNA"/>
</dbReference>
<dbReference type="EMBL" id="AK129330">
    <property type="protein sequence ID" value="BAC98140.1"/>
    <property type="molecule type" value="mRNA"/>
</dbReference>
<dbReference type="EMBL" id="AK042613">
    <property type="protein sequence ID" value="BAC31304.2"/>
    <property type="status" value="ALT_FRAME"/>
    <property type="molecule type" value="mRNA"/>
</dbReference>
<dbReference type="EMBL" id="AK087759">
    <property type="protein sequence ID" value="BAC39993.1"/>
    <property type="status" value="ALT_INIT"/>
    <property type="molecule type" value="mRNA"/>
</dbReference>
<dbReference type="EMBL" id="BC054080">
    <property type="protein sequence ID" value="AAH54080.1"/>
    <property type="status" value="ALT_FRAME"/>
    <property type="molecule type" value="mRNA"/>
</dbReference>
<dbReference type="CCDS" id="CCDS50267.1">
    <molecule id="Q5SFM8-2"/>
</dbReference>
<dbReference type="RefSeq" id="NP_001395138.1">
    <molecule id="Q5SFM8-1"/>
    <property type="nucleotide sequence ID" value="NM_001408209.1"/>
</dbReference>
<dbReference type="RefSeq" id="NP_766214.2">
    <molecule id="Q5SFM8-2"/>
    <property type="nucleotide sequence ID" value="NM_172626.2"/>
</dbReference>
<dbReference type="RefSeq" id="XP_006525926.1">
    <property type="nucleotide sequence ID" value="XM_006525863.2"/>
</dbReference>
<dbReference type="SMR" id="Q5SFM8"/>
<dbReference type="BioGRID" id="230393">
    <property type="interactions" value="3"/>
</dbReference>
<dbReference type="FunCoup" id="Q5SFM8">
    <property type="interactions" value="5291"/>
</dbReference>
<dbReference type="IntAct" id="Q5SFM8">
    <property type="interactions" value="1"/>
</dbReference>
<dbReference type="MINT" id="Q5SFM8"/>
<dbReference type="STRING" id="10090.ENSMUSP00000089540"/>
<dbReference type="GlyGen" id="Q5SFM8">
    <property type="glycosylation" value="7 sites, 1 N-linked glycan (1 site), 1 O-linked glycan (6 sites)"/>
</dbReference>
<dbReference type="iPTMnet" id="Q5SFM8"/>
<dbReference type="PhosphoSitePlus" id="Q5SFM8"/>
<dbReference type="SwissPalm" id="Q5SFM8"/>
<dbReference type="jPOST" id="Q5SFM8"/>
<dbReference type="PaxDb" id="10090-ENSMUSP00000089540"/>
<dbReference type="PeptideAtlas" id="Q5SFM8"/>
<dbReference type="ProteomicsDB" id="300262">
    <molecule id="Q5SFM8-1"/>
</dbReference>
<dbReference type="ProteomicsDB" id="300263">
    <molecule id="Q5SFM8-2"/>
</dbReference>
<dbReference type="ProteomicsDB" id="300264">
    <molecule id="Q5SFM8-3"/>
</dbReference>
<dbReference type="Pumba" id="Q5SFM8"/>
<dbReference type="Ensembl" id="ENSMUST00000046972.14">
    <molecule id="Q5SFM8-3"/>
    <property type="protein sequence ID" value="ENSMUSP00000041688.8"/>
    <property type="gene ID" value="ENSMUSG00000024491.17"/>
</dbReference>
<dbReference type="Ensembl" id="ENSMUST00000091920.6">
    <molecule id="Q5SFM8-2"/>
    <property type="protein sequence ID" value="ENSMUSP00000089540.6"/>
    <property type="gene ID" value="ENSMUSG00000024491.17"/>
</dbReference>
<dbReference type="Ensembl" id="ENSMUST00000236240.2">
    <molecule id="Q5SFM8-1"/>
    <property type="protein sequence ID" value="ENSMUSP00000158063.2"/>
    <property type="gene ID" value="ENSMUSG00000024491.17"/>
</dbReference>
<dbReference type="GeneID" id="225432"/>
<dbReference type="KEGG" id="mmu:225432"/>
<dbReference type="UCSC" id="uc008etr.2">
    <molecule id="Q5SFM8-2"/>
    <property type="organism name" value="mouse"/>
</dbReference>
<dbReference type="UCSC" id="uc008ets.1">
    <molecule id="Q5SFM8-3"/>
    <property type="organism name" value="mouse"/>
</dbReference>
<dbReference type="UCSC" id="uc008ett.1">
    <molecule id="Q5SFM8-1"/>
    <property type="organism name" value="mouse"/>
</dbReference>
<dbReference type="AGR" id="MGI:2147194"/>
<dbReference type="CTD" id="54439"/>
<dbReference type="MGI" id="MGI:2147194">
    <property type="gene designation" value="Rbm27"/>
</dbReference>
<dbReference type="VEuPathDB" id="HostDB:ENSMUSG00000024491"/>
<dbReference type="eggNOG" id="KOG2135">
    <property type="taxonomic scope" value="Eukaryota"/>
</dbReference>
<dbReference type="GeneTree" id="ENSGT00510000046929"/>
<dbReference type="HOGENOM" id="CLU_006190_0_0_1"/>
<dbReference type="InParanoid" id="Q5SFM8"/>
<dbReference type="OMA" id="ANAKCWQ"/>
<dbReference type="OrthoDB" id="443401at2759"/>
<dbReference type="TreeFam" id="TF319253"/>
<dbReference type="BioGRID-ORCS" id="225432">
    <property type="hits" value="12 hits in 81 CRISPR screens"/>
</dbReference>
<dbReference type="ChiTaRS" id="Rbm27">
    <property type="organism name" value="mouse"/>
</dbReference>
<dbReference type="PRO" id="PR:Q5SFM8"/>
<dbReference type="Proteomes" id="UP000000589">
    <property type="component" value="Chromosome 18"/>
</dbReference>
<dbReference type="RNAct" id="Q5SFM8">
    <property type="molecule type" value="protein"/>
</dbReference>
<dbReference type="Bgee" id="ENSMUSG00000024491">
    <property type="expression patterns" value="Expressed in ear vesicle and 227 other cell types or tissues"/>
</dbReference>
<dbReference type="GO" id="GO:0005737">
    <property type="term" value="C:cytoplasm"/>
    <property type="evidence" value="ECO:0007669"/>
    <property type="project" value="UniProtKB-SubCell"/>
</dbReference>
<dbReference type="GO" id="GO:0016607">
    <property type="term" value="C:nuclear speck"/>
    <property type="evidence" value="ECO:0007669"/>
    <property type="project" value="UniProtKB-SubCell"/>
</dbReference>
<dbReference type="GO" id="GO:0003723">
    <property type="term" value="F:RNA binding"/>
    <property type="evidence" value="ECO:0007669"/>
    <property type="project" value="UniProtKB-KW"/>
</dbReference>
<dbReference type="GO" id="GO:0008270">
    <property type="term" value="F:zinc ion binding"/>
    <property type="evidence" value="ECO:0007669"/>
    <property type="project" value="UniProtKB-KW"/>
</dbReference>
<dbReference type="CDD" id="cd12517">
    <property type="entry name" value="RRM_RBM27"/>
    <property type="match status" value="1"/>
</dbReference>
<dbReference type="FunFam" id="1.20.1390.10:FF:000001">
    <property type="entry name" value="RNA-binding protein 26 isoform X2"/>
    <property type="match status" value="1"/>
</dbReference>
<dbReference type="FunFam" id="3.30.70.330:FF:000208">
    <property type="entry name" value="RNA-binding protein 27 isoform X2"/>
    <property type="match status" value="1"/>
</dbReference>
<dbReference type="Gene3D" id="3.30.70.330">
    <property type="match status" value="1"/>
</dbReference>
<dbReference type="Gene3D" id="1.20.1390.10">
    <property type="entry name" value="PWI domain"/>
    <property type="match status" value="1"/>
</dbReference>
<dbReference type="InterPro" id="IPR012677">
    <property type="entry name" value="Nucleotide-bd_a/b_plait_sf"/>
</dbReference>
<dbReference type="InterPro" id="IPR002483">
    <property type="entry name" value="PWI_dom"/>
</dbReference>
<dbReference type="InterPro" id="IPR035979">
    <property type="entry name" value="RBD_domain_sf"/>
</dbReference>
<dbReference type="InterPro" id="IPR045137">
    <property type="entry name" value="RBM26/27"/>
</dbReference>
<dbReference type="InterPro" id="IPR034451">
    <property type="entry name" value="RBM27_RRM"/>
</dbReference>
<dbReference type="InterPro" id="IPR000504">
    <property type="entry name" value="RRM_dom"/>
</dbReference>
<dbReference type="InterPro" id="IPR000571">
    <property type="entry name" value="Znf_CCCH"/>
</dbReference>
<dbReference type="PANTHER" id="PTHR14398">
    <property type="entry name" value="RNA RECOGNITION RRM/RNP DOMAIN"/>
    <property type="match status" value="1"/>
</dbReference>
<dbReference type="PANTHER" id="PTHR14398:SF1">
    <property type="entry name" value="RNA-BINDING PROTEIN 27"/>
    <property type="match status" value="1"/>
</dbReference>
<dbReference type="Pfam" id="PF01480">
    <property type="entry name" value="PWI"/>
    <property type="match status" value="1"/>
</dbReference>
<dbReference type="Pfam" id="PF00076">
    <property type="entry name" value="RRM_1"/>
    <property type="match status" value="1"/>
</dbReference>
<dbReference type="Pfam" id="PF00642">
    <property type="entry name" value="zf-CCCH"/>
    <property type="match status" value="1"/>
</dbReference>
<dbReference type="SMART" id="SM00360">
    <property type="entry name" value="RRM"/>
    <property type="match status" value="1"/>
</dbReference>
<dbReference type="SUPFAM" id="SSF54928">
    <property type="entry name" value="RNA-binding domain, RBD"/>
    <property type="match status" value="1"/>
</dbReference>
<dbReference type="PROSITE" id="PS50102">
    <property type="entry name" value="RRM"/>
    <property type="match status" value="1"/>
</dbReference>
<dbReference type="PROSITE" id="PS50103">
    <property type="entry name" value="ZF_C3H1"/>
    <property type="match status" value="1"/>
</dbReference>
<feature type="chain" id="PRO_0000273045" description="RNA-binding protein 27">
    <location>
        <begin position="1"/>
        <end position="1060"/>
    </location>
</feature>
<feature type="domain" description="RRM" evidence="3">
    <location>
        <begin position="600"/>
        <end position="674"/>
    </location>
</feature>
<feature type="zinc finger region" description="C3H1-type" evidence="4">
    <location>
        <begin position="273"/>
        <end position="301"/>
    </location>
</feature>
<feature type="region of interest" description="Disordered" evidence="5">
    <location>
        <begin position="80"/>
        <end position="143"/>
    </location>
</feature>
<feature type="region of interest" description="Disordered" evidence="5">
    <location>
        <begin position="160"/>
        <end position="278"/>
    </location>
</feature>
<feature type="region of interest" description="Disordered" evidence="5">
    <location>
        <begin position="319"/>
        <end position="416"/>
    </location>
</feature>
<feature type="region of interest" description="Disordered" evidence="5">
    <location>
        <begin position="572"/>
        <end position="594"/>
    </location>
</feature>
<feature type="region of interest" description="Disordered" evidence="5">
    <location>
        <begin position="754"/>
        <end position="775"/>
    </location>
</feature>
<feature type="region of interest" description="Disordered" evidence="5">
    <location>
        <begin position="943"/>
        <end position="982"/>
    </location>
</feature>
<feature type="region of interest" description="Disordered" evidence="5">
    <location>
        <begin position="1014"/>
        <end position="1060"/>
    </location>
</feature>
<feature type="coiled-coil region" evidence="2">
    <location>
        <begin position="810"/>
        <end position="887"/>
    </location>
</feature>
<feature type="compositionally biased region" description="Basic and acidic residues" evidence="5">
    <location>
        <begin position="84"/>
        <end position="102"/>
    </location>
</feature>
<feature type="compositionally biased region" description="Basic and acidic residues" evidence="5">
    <location>
        <begin position="124"/>
        <end position="143"/>
    </location>
</feature>
<feature type="compositionally biased region" description="Basic residues" evidence="5">
    <location>
        <begin position="165"/>
        <end position="185"/>
    </location>
</feature>
<feature type="compositionally biased region" description="Basic and acidic residues" evidence="5">
    <location>
        <begin position="186"/>
        <end position="211"/>
    </location>
</feature>
<feature type="compositionally biased region" description="Low complexity" evidence="5">
    <location>
        <begin position="225"/>
        <end position="235"/>
    </location>
</feature>
<feature type="compositionally biased region" description="Low complexity" evidence="5">
    <location>
        <begin position="255"/>
        <end position="268"/>
    </location>
</feature>
<feature type="compositionally biased region" description="Pro residues" evidence="5">
    <location>
        <begin position="319"/>
        <end position="356"/>
    </location>
</feature>
<feature type="compositionally biased region" description="Pro residues" evidence="5">
    <location>
        <begin position="371"/>
        <end position="384"/>
    </location>
</feature>
<feature type="compositionally biased region" description="Polar residues" evidence="5">
    <location>
        <begin position="387"/>
        <end position="402"/>
    </location>
</feature>
<feature type="compositionally biased region" description="Polar residues" evidence="5">
    <location>
        <begin position="755"/>
        <end position="770"/>
    </location>
</feature>
<feature type="compositionally biased region" description="Acidic residues" evidence="5">
    <location>
        <begin position="1024"/>
        <end position="1037"/>
    </location>
</feature>
<feature type="compositionally biased region" description="Acidic residues" evidence="5">
    <location>
        <begin position="1044"/>
        <end position="1053"/>
    </location>
</feature>
<feature type="modified residue" description="Phosphothreonine" evidence="11">
    <location>
        <position position="447"/>
    </location>
</feature>
<feature type="modified residue" description="Omega-N-methylarginine" evidence="1">
    <location>
        <position position="455"/>
    </location>
</feature>
<feature type="modified residue" description="Phosphoserine" evidence="11">
    <location>
        <position position="928"/>
    </location>
</feature>
<feature type="modified residue" description="Phosphoserine" evidence="1">
    <location>
        <position position="1012"/>
    </location>
</feature>
<feature type="modified residue" description="Phosphoserine" evidence="1">
    <location>
        <position position="1020"/>
    </location>
</feature>
<feature type="splice variant" id="VSP_022462" description="In isoform 2." evidence="8">
    <original>RQPMYSREHGAAASERLQLGTPPPLLAARLVPPRNLMGSSIGYHTSVSSPTPLVPD</original>
    <variation>N</variation>
    <location>
        <begin position="427"/>
        <end position="482"/>
    </location>
</feature>
<feature type="splice variant" id="VSP_022463" description="In isoform 3." evidence="7">
    <location>
        <begin position="632"/>
        <end position="730"/>
    </location>
</feature>
<feature type="sequence conflict" description="In Ref. 1; AAS19274." evidence="9" ref="1">
    <original>S</original>
    <variation>P</variation>
    <location>
        <position position="214"/>
    </location>
</feature>
<feature type="sequence conflict" description="In Ref. 4; BAC31304." evidence="9" ref="4">
    <original>V</original>
    <variation>L</variation>
    <location>
        <position position="304"/>
    </location>
</feature>
<feature type="sequence conflict" description="In Ref. 3; BAC98140." evidence="9" ref="3">
    <original>D</original>
    <variation>Y</variation>
    <location>
        <position position="909"/>
    </location>
</feature>
<reference key="1">
    <citation type="journal article" date="2005" name="Nucleic Acids Res.">
        <title>A family of RS domain proteins with novel subcellular localization and trafficking.</title>
        <authorList>
            <person name="Kavanagh S.J."/>
            <person name="Schulz T.C."/>
            <person name="Davey P."/>
            <person name="Claudianos C."/>
            <person name="Russell C."/>
            <person name="Rathjen P.D."/>
        </authorList>
    </citation>
    <scope>NUCLEOTIDE SEQUENCE [MRNA] (ISOFORM 2)</scope>
    <scope>SUBCELLULAR LOCATION</scope>
    <source>
        <strain>C57BL/6J</strain>
    </source>
</reference>
<reference key="2">
    <citation type="journal article" date="2009" name="PLoS Biol.">
        <title>Lineage-specific biology revealed by a finished genome assembly of the mouse.</title>
        <authorList>
            <person name="Church D.M."/>
            <person name="Goodstadt L."/>
            <person name="Hillier L.W."/>
            <person name="Zody M.C."/>
            <person name="Goldstein S."/>
            <person name="She X."/>
            <person name="Bult C.J."/>
            <person name="Agarwala R."/>
            <person name="Cherry J.L."/>
            <person name="DiCuccio M."/>
            <person name="Hlavina W."/>
            <person name="Kapustin Y."/>
            <person name="Meric P."/>
            <person name="Maglott D."/>
            <person name="Birtle Z."/>
            <person name="Marques A.C."/>
            <person name="Graves T."/>
            <person name="Zhou S."/>
            <person name="Teague B."/>
            <person name="Potamousis K."/>
            <person name="Churas C."/>
            <person name="Place M."/>
            <person name="Herschleb J."/>
            <person name="Runnheim R."/>
            <person name="Forrest D."/>
            <person name="Amos-Landgraf J."/>
            <person name="Schwartz D.C."/>
            <person name="Cheng Z."/>
            <person name="Lindblad-Toh K."/>
            <person name="Eichler E.E."/>
            <person name="Ponting C.P."/>
        </authorList>
    </citation>
    <scope>NUCLEOTIDE SEQUENCE [LARGE SCALE GENOMIC DNA]</scope>
    <source>
        <strain>C57BL/6J</strain>
    </source>
</reference>
<reference key="3">
    <citation type="journal article" date="2003" name="DNA Res.">
        <title>Prediction of the coding sequences of mouse homologues of KIAA gene: III. The complete nucleotide sequences of 500 mouse KIAA-homologous cDNAs identified by screening of terminal sequences of cDNA clones randomly sampled from size-fractionated libraries.</title>
        <authorList>
            <person name="Okazaki N."/>
            <person name="Kikuno R."/>
            <person name="Ohara R."/>
            <person name="Inamoto S."/>
            <person name="Koseki H."/>
            <person name="Hiraoka S."/>
            <person name="Saga Y."/>
            <person name="Nagase T."/>
            <person name="Ohara O."/>
            <person name="Koga H."/>
        </authorList>
    </citation>
    <scope>NUCLEOTIDE SEQUENCE [LARGE SCALE MRNA] OF 326-1060 (ISOFORM 1)</scope>
    <source>
        <tissue>Embryonic tail</tissue>
    </source>
</reference>
<reference key="4">
    <citation type="journal article" date="2005" name="Science">
        <title>The transcriptional landscape of the mammalian genome.</title>
        <authorList>
            <person name="Carninci P."/>
            <person name="Kasukawa T."/>
            <person name="Katayama S."/>
            <person name="Gough J."/>
            <person name="Frith M.C."/>
            <person name="Maeda N."/>
            <person name="Oyama R."/>
            <person name="Ravasi T."/>
            <person name="Lenhard B."/>
            <person name="Wells C."/>
            <person name="Kodzius R."/>
            <person name="Shimokawa K."/>
            <person name="Bajic V.B."/>
            <person name="Brenner S.E."/>
            <person name="Batalov S."/>
            <person name="Forrest A.R."/>
            <person name="Zavolan M."/>
            <person name="Davis M.J."/>
            <person name="Wilming L.G."/>
            <person name="Aidinis V."/>
            <person name="Allen J.E."/>
            <person name="Ambesi-Impiombato A."/>
            <person name="Apweiler R."/>
            <person name="Aturaliya R.N."/>
            <person name="Bailey T.L."/>
            <person name="Bansal M."/>
            <person name="Baxter L."/>
            <person name="Beisel K.W."/>
            <person name="Bersano T."/>
            <person name="Bono H."/>
            <person name="Chalk A.M."/>
            <person name="Chiu K.P."/>
            <person name="Choudhary V."/>
            <person name="Christoffels A."/>
            <person name="Clutterbuck D.R."/>
            <person name="Crowe M.L."/>
            <person name="Dalla E."/>
            <person name="Dalrymple B.P."/>
            <person name="de Bono B."/>
            <person name="Della Gatta G."/>
            <person name="di Bernardo D."/>
            <person name="Down T."/>
            <person name="Engstrom P."/>
            <person name="Fagiolini M."/>
            <person name="Faulkner G."/>
            <person name="Fletcher C.F."/>
            <person name="Fukushima T."/>
            <person name="Furuno M."/>
            <person name="Futaki S."/>
            <person name="Gariboldi M."/>
            <person name="Georgii-Hemming P."/>
            <person name="Gingeras T.R."/>
            <person name="Gojobori T."/>
            <person name="Green R.E."/>
            <person name="Gustincich S."/>
            <person name="Harbers M."/>
            <person name="Hayashi Y."/>
            <person name="Hensch T.K."/>
            <person name="Hirokawa N."/>
            <person name="Hill D."/>
            <person name="Huminiecki L."/>
            <person name="Iacono M."/>
            <person name="Ikeo K."/>
            <person name="Iwama A."/>
            <person name="Ishikawa T."/>
            <person name="Jakt M."/>
            <person name="Kanapin A."/>
            <person name="Katoh M."/>
            <person name="Kawasawa Y."/>
            <person name="Kelso J."/>
            <person name="Kitamura H."/>
            <person name="Kitano H."/>
            <person name="Kollias G."/>
            <person name="Krishnan S.P."/>
            <person name="Kruger A."/>
            <person name="Kummerfeld S.K."/>
            <person name="Kurochkin I.V."/>
            <person name="Lareau L.F."/>
            <person name="Lazarevic D."/>
            <person name="Lipovich L."/>
            <person name="Liu J."/>
            <person name="Liuni S."/>
            <person name="McWilliam S."/>
            <person name="Madan Babu M."/>
            <person name="Madera M."/>
            <person name="Marchionni L."/>
            <person name="Matsuda H."/>
            <person name="Matsuzawa S."/>
            <person name="Miki H."/>
            <person name="Mignone F."/>
            <person name="Miyake S."/>
            <person name="Morris K."/>
            <person name="Mottagui-Tabar S."/>
            <person name="Mulder N."/>
            <person name="Nakano N."/>
            <person name="Nakauchi H."/>
            <person name="Ng P."/>
            <person name="Nilsson R."/>
            <person name="Nishiguchi S."/>
            <person name="Nishikawa S."/>
            <person name="Nori F."/>
            <person name="Ohara O."/>
            <person name="Okazaki Y."/>
            <person name="Orlando V."/>
            <person name="Pang K.C."/>
            <person name="Pavan W.J."/>
            <person name="Pavesi G."/>
            <person name="Pesole G."/>
            <person name="Petrovsky N."/>
            <person name="Piazza S."/>
            <person name="Reed J."/>
            <person name="Reid J.F."/>
            <person name="Ring B.Z."/>
            <person name="Ringwald M."/>
            <person name="Rost B."/>
            <person name="Ruan Y."/>
            <person name="Salzberg S.L."/>
            <person name="Sandelin A."/>
            <person name="Schneider C."/>
            <person name="Schoenbach C."/>
            <person name="Sekiguchi K."/>
            <person name="Semple C.A."/>
            <person name="Seno S."/>
            <person name="Sessa L."/>
            <person name="Sheng Y."/>
            <person name="Shibata Y."/>
            <person name="Shimada H."/>
            <person name="Shimada K."/>
            <person name="Silva D."/>
            <person name="Sinclair B."/>
            <person name="Sperling S."/>
            <person name="Stupka E."/>
            <person name="Sugiura K."/>
            <person name="Sultana R."/>
            <person name="Takenaka Y."/>
            <person name="Taki K."/>
            <person name="Tammoja K."/>
            <person name="Tan S.L."/>
            <person name="Tang S."/>
            <person name="Taylor M.S."/>
            <person name="Tegner J."/>
            <person name="Teichmann S.A."/>
            <person name="Ueda H.R."/>
            <person name="van Nimwegen E."/>
            <person name="Verardo R."/>
            <person name="Wei C.L."/>
            <person name="Yagi K."/>
            <person name="Yamanishi H."/>
            <person name="Zabarovsky E."/>
            <person name="Zhu S."/>
            <person name="Zimmer A."/>
            <person name="Hide W."/>
            <person name="Bult C."/>
            <person name="Grimmond S.M."/>
            <person name="Teasdale R.D."/>
            <person name="Liu E.T."/>
            <person name="Brusic V."/>
            <person name="Quackenbush J."/>
            <person name="Wahlestedt C."/>
            <person name="Mattick J.S."/>
            <person name="Hume D.A."/>
            <person name="Kai C."/>
            <person name="Sasaki D."/>
            <person name="Tomaru Y."/>
            <person name="Fukuda S."/>
            <person name="Kanamori-Katayama M."/>
            <person name="Suzuki M."/>
            <person name="Aoki J."/>
            <person name="Arakawa T."/>
            <person name="Iida J."/>
            <person name="Imamura K."/>
            <person name="Itoh M."/>
            <person name="Kato T."/>
            <person name="Kawaji H."/>
            <person name="Kawagashira N."/>
            <person name="Kawashima T."/>
            <person name="Kojima M."/>
            <person name="Kondo S."/>
            <person name="Konno H."/>
            <person name="Nakano K."/>
            <person name="Ninomiya N."/>
            <person name="Nishio T."/>
            <person name="Okada M."/>
            <person name="Plessy C."/>
            <person name="Shibata K."/>
            <person name="Shiraki T."/>
            <person name="Suzuki S."/>
            <person name="Tagami M."/>
            <person name="Waki K."/>
            <person name="Watahiki A."/>
            <person name="Okamura-Oho Y."/>
            <person name="Suzuki H."/>
            <person name="Kawai J."/>
            <person name="Hayashizaki Y."/>
        </authorList>
    </citation>
    <scope>NUCLEOTIDE SEQUENCE [LARGE SCALE MRNA] OF 197-849 (ISOFORM 1)</scope>
    <source>
        <strain>C57BL/6J</strain>
        <tissue>Cerebellum</tissue>
    </source>
</reference>
<reference key="5">
    <citation type="journal article" date="2004" name="Genome Res.">
        <title>The status, quality, and expansion of the NIH full-length cDNA project: the Mammalian Gene Collection (MGC).</title>
        <authorList>
            <consortium name="The MGC Project Team"/>
        </authorList>
    </citation>
    <scope>NUCLEOTIDE SEQUENCE [LARGE SCALE MRNA] OF 132-1060 (ISOFORM 3)</scope>
    <source>
        <tissue>Olfactory epithelium</tissue>
    </source>
</reference>
<reference key="6">
    <citation type="journal article" date="2010" name="Cell">
        <title>A tissue-specific atlas of mouse protein phosphorylation and expression.</title>
        <authorList>
            <person name="Huttlin E.L."/>
            <person name="Jedrychowski M.P."/>
            <person name="Elias J.E."/>
            <person name="Goswami T."/>
            <person name="Rad R."/>
            <person name="Beausoleil S.A."/>
            <person name="Villen J."/>
            <person name="Haas W."/>
            <person name="Sowa M.E."/>
            <person name="Gygi S.P."/>
        </authorList>
    </citation>
    <scope>PHOSPHORYLATION [LARGE SCALE ANALYSIS] AT THR-447 AND SER-928</scope>
    <scope>IDENTIFICATION BY MASS SPECTROMETRY [LARGE SCALE ANALYSIS]</scope>
    <source>
        <tissue>Brain</tissue>
        <tissue>Kidney</tissue>
        <tissue>Pancreas</tissue>
        <tissue>Testis</tissue>
    </source>
</reference>
<sequence>MLIEDVDALKSWLAKLLEPICDADPSALANYVVALVKKDKPEKELKAFCADQLDVFLQKETSGFVDKLFESLYTKNYLPPLEPVKPEPKPLVQEKEEIKEEVFQEPAEEERDTRKKKYPSPQKSRSESSERRTREKKREDGKWRDYERYYERNELYREKYDWRRGRSKSRSKSRGLSRSRSRSRGRSKDRDPNRNVEHRERSKFKSERNDLESSYVPVSAPPPSSSEQYSSGAQSIPSTVTVIAPAHHSENTTESWSNYYNNHSSSNSFGRNPPPKRRCRDYDERGFCVLGDLCQFDHGNDPLVVDEVALPSMIPFPPPPPGLPPPPPPGMLMPPMPGPGPGPGPGPGPGPGPGPGPGHSMRLPVPQGHGQPPPSVVLPIPRPPISQSSLINSRDQPGTSAVPNLAPVGARLPPPLPQNLLYTVSERQPMYSREHGAAASERLQLGTPPPLLAARLVPPRNLMGSSIGYHTSVSSPTPLVPDTYEPDGYNPEAPSITSSGRSQYRQFFSRAQTQRPNLIGLTSGDMDANPRAANIVIQTEPPVPVSVNSNVTRVVLEPESRKRAISGLEGPLTKKPWLGKQGNNNQSKPGFLRKNHYTNTKLEVKKIPQELNNITKLNEHFSKFGTIVNIQVAFKGDPEAALIQYLTNEEARKAISSTEAVLNNRFIRVLWHRENNEQPALQSSAQILLQQQHTLSHLSQQHHSLPQHLHPQQVMVTQSSPSSVHGGIQKMMGKPQTSGAYVLNKVPVKHRLGHASTNQSDTSHLLNQTGGSSGEDCPVFSTPGHPKTIYSSSNLKAPSKLCSGSKSHDVQEVLKKKQEAMKLQQDMRKKKQEMLEKQIECQKMLISKLEKNKNMKPEERANIMKTLKELGEKISQLKDELKTSSTVSTPSKVKTKTEAQKELLDTELDLHKRLSSGEDTTELRKKLSQLQVEAARLGILPVGRGKTISSQGRGRGRGRGRGRGSLNHMVVDHRPKALPGGGFIEEEKDELLQHFSATNQASKFKDRRLQISWHKPKVPSISTETEEEEVKEEETETSDLFLHDDDDEDEDEYESRSWRR</sequence>
<keyword id="KW-0025">Alternative splicing</keyword>
<keyword id="KW-0175">Coiled coil</keyword>
<keyword id="KW-0963">Cytoplasm</keyword>
<keyword id="KW-0479">Metal-binding</keyword>
<keyword id="KW-0488">Methylation</keyword>
<keyword id="KW-0539">Nucleus</keyword>
<keyword id="KW-0597">Phosphoprotein</keyword>
<keyword id="KW-1185">Reference proteome</keyword>
<keyword id="KW-0694">RNA-binding</keyword>
<keyword id="KW-0862">Zinc</keyword>
<keyword id="KW-0863">Zinc-finger</keyword>
<comment type="function">
    <text evidence="1">May be involved in the turnover of nuclear polyadenylated (pA+) RNA.</text>
</comment>
<comment type="subcellular location">
    <subcellularLocation>
        <location evidence="6">Cytoplasm</location>
    </subcellularLocation>
    <subcellularLocation>
        <location evidence="6">Nucleus speckle</location>
    </subcellularLocation>
    <text>Incorporated into the nuclear speckles and to speckles proximal to the nuclear periphery. Also localizes to punctate structures in the cytoplasm termed cytospeckles.</text>
</comment>
<comment type="alternative products">
    <event type="alternative splicing"/>
    <isoform>
        <id>Q5SFM8-1</id>
        <name>1</name>
        <sequence type="displayed"/>
    </isoform>
    <isoform>
        <id>Q5SFM8-2</id>
        <name>2</name>
        <sequence type="described" ref="VSP_022462"/>
    </isoform>
    <isoform>
        <id>Q5SFM8-3</id>
        <name>3</name>
        <sequence type="described" ref="VSP_022463"/>
    </isoform>
</comment>
<comment type="domain">
    <text>The RRM domain mediates integration into cytospeckles.</text>
</comment>
<comment type="sequence caution" evidence="9">
    <conflict type="frameshift">
        <sequence resource="EMBL-CDS" id="AAH54080"/>
    </conflict>
</comment>
<comment type="sequence caution" evidence="9">
    <conflict type="frameshift">
        <sequence resource="EMBL-CDS" id="BAC31304"/>
    </conflict>
</comment>
<comment type="sequence caution" evidence="9">
    <conflict type="erroneous initiation">
        <sequence resource="EMBL-CDS" id="BAC39993"/>
    </conflict>
    <text>Truncated N-terminus.</text>
</comment>
<evidence type="ECO:0000250" key="1">
    <source>
        <dbReference type="UniProtKB" id="Q9P2N5"/>
    </source>
</evidence>
<evidence type="ECO:0000255" key="2"/>
<evidence type="ECO:0000255" key="3">
    <source>
        <dbReference type="PROSITE-ProRule" id="PRU00176"/>
    </source>
</evidence>
<evidence type="ECO:0000255" key="4">
    <source>
        <dbReference type="PROSITE-ProRule" id="PRU00723"/>
    </source>
</evidence>
<evidence type="ECO:0000256" key="5">
    <source>
        <dbReference type="SAM" id="MobiDB-lite"/>
    </source>
</evidence>
<evidence type="ECO:0000269" key="6">
    <source>
    </source>
</evidence>
<evidence type="ECO:0000303" key="7">
    <source>
    </source>
</evidence>
<evidence type="ECO:0000303" key="8">
    <source>
    </source>
</evidence>
<evidence type="ECO:0000305" key="9"/>
<evidence type="ECO:0000312" key="10">
    <source>
        <dbReference type="MGI" id="MGI:2147194"/>
    </source>
</evidence>
<evidence type="ECO:0007744" key="11">
    <source>
    </source>
</evidence>
<accession>Q5SFM8</accession>
<accession>E9QM85</accession>
<accession>Q6ZPT9</accession>
<accession>Q7TQK8</accession>
<accession>Q8C2X5</accession>
<accession>Q8C9A5</accession>
<name>RBM27_MOUSE</name>
<organism>
    <name type="scientific">Mus musculus</name>
    <name type="common">Mouse</name>
    <dbReference type="NCBI Taxonomy" id="10090"/>
    <lineage>
        <taxon>Eukaryota</taxon>
        <taxon>Metazoa</taxon>
        <taxon>Chordata</taxon>
        <taxon>Craniata</taxon>
        <taxon>Vertebrata</taxon>
        <taxon>Euteleostomi</taxon>
        <taxon>Mammalia</taxon>
        <taxon>Eutheria</taxon>
        <taxon>Euarchontoglires</taxon>
        <taxon>Glires</taxon>
        <taxon>Rodentia</taxon>
        <taxon>Myomorpha</taxon>
        <taxon>Muroidea</taxon>
        <taxon>Muridae</taxon>
        <taxon>Murinae</taxon>
        <taxon>Mus</taxon>
        <taxon>Mus</taxon>
    </lineage>
</organism>
<protein>
    <recommendedName>
        <fullName evidence="9">RNA-binding protein 27</fullName>
    </recommendedName>
    <alternativeName>
        <fullName>Peri-implantation stem cell protein 1</fullName>
    </alternativeName>
    <alternativeName>
        <fullName>RNA-binding motif protein 27</fullName>
    </alternativeName>
</protein>
<proteinExistence type="evidence at protein level"/>